<reference key="1">
    <citation type="journal article" date="2001" name="Science">
        <title>Comparative genomics of Listeria species.</title>
        <authorList>
            <person name="Glaser P."/>
            <person name="Frangeul L."/>
            <person name="Buchrieser C."/>
            <person name="Rusniok C."/>
            <person name="Amend A."/>
            <person name="Baquero F."/>
            <person name="Berche P."/>
            <person name="Bloecker H."/>
            <person name="Brandt P."/>
            <person name="Chakraborty T."/>
            <person name="Charbit A."/>
            <person name="Chetouani F."/>
            <person name="Couve E."/>
            <person name="de Daruvar A."/>
            <person name="Dehoux P."/>
            <person name="Domann E."/>
            <person name="Dominguez-Bernal G."/>
            <person name="Duchaud E."/>
            <person name="Durant L."/>
            <person name="Dussurget O."/>
            <person name="Entian K.-D."/>
            <person name="Fsihi H."/>
            <person name="Garcia-del Portillo F."/>
            <person name="Garrido P."/>
            <person name="Gautier L."/>
            <person name="Goebel W."/>
            <person name="Gomez-Lopez N."/>
            <person name="Hain T."/>
            <person name="Hauf J."/>
            <person name="Jackson D."/>
            <person name="Jones L.-M."/>
            <person name="Kaerst U."/>
            <person name="Kreft J."/>
            <person name="Kuhn M."/>
            <person name="Kunst F."/>
            <person name="Kurapkat G."/>
            <person name="Madueno E."/>
            <person name="Maitournam A."/>
            <person name="Mata Vicente J."/>
            <person name="Ng E."/>
            <person name="Nedjari H."/>
            <person name="Nordsiek G."/>
            <person name="Novella S."/>
            <person name="de Pablos B."/>
            <person name="Perez-Diaz J.-C."/>
            <person name="Purcell R."/>
            <person name="Remmel B."/>
            <person name="Rose M."/>
            <person name="Schlueter T."/>
            <person name="Simoes N."/>
            <person name="Tierrez A."/>
            <person name="Vazquez-Boland J.-A."/>
            <person name="Voss H."/>
            <person name="Wehland J."/>
            <person name="Cossart P."/>
        </authorList>
    </citation>
    <scope>NUCLEOTIDE SEQUENCE [LARGE SCALE GENOMIC DNA]</scope>
    <source>
        <strain>ATCC BAA-679 / EGD-e</strain>
    </source>
</reference>
<gene>
    <name type="ordered locus">lmo1058</name>
</gene>
<organism>
    <name type="scientific">Listeria monocytogenes serovar 1/2a (strain ATCC BAA-679 / EGD-e)</name>
    <dbReference type="NCBI Taxonomy" id="169963"/>
    <lineage>
        <taxon>Bacteria</taxon>
        <taxon>Bacillati</taxon>
        <taxon>Bacillota</taxon>
        <taxon>Bacilli</taxon>
        <taxon>Bacillales</taxon>
        <taxon>Listeriaceae</taxon>
        <taxon>Listeria</taxon>
    </lineage>
</organism>
<proteinExistence type="inferred from homology"/>
<accession>P67356</accession>
<accession>Q92CX1</accession>
<protein>
    <recommendedName>
        <fullName evidence="1">UPF0223 protein lmo1058</fullName>
    </recommendedName>
</protein>
<keyword id="KW-1185">Reference proteome</keyword>
<feature type="chain" id="PRO_0000216680" description="UPF0223 protein lmo1058">
    <location>
        <begin position="1"/>
        <end position="90"/>
    </location>
</feature>
<name>Y1058_LISMO</name>
<dbReference type="EMBL" id="AL591977">
    <property type="protein sequence ID" value="CAC99136.1"/>
    <property type="molecule type" value="Genomic_DNA"/>
</dbReference>
<dbReference type="PIR" id="AB1207">
    <property type="entry name" value="AB1207"/>
</dbReference>
<dbReference type="RefSeq" id="NP_464583.1">
    <property type="nucleotide sequence ID" value="NC_003210.1"/>
</dbReference>
<dbReference type="RefSeq" id="WP_003722685.1">
    <property type="nucleotide sequence ID" value="NZ_CP149495.1"/>
</dbReference>
<dbReference type="SMR" id="P67356"/>
<dbReference type="STRING" id="169963.gene:17593714"/>
<dbReference type="PaxDb" id="169963-lmo1058"/>
<dbReference type="EnsemblBacteria" id="CAC99136">
    <property type="protein sequence ID" value="CAC99136"/>
    <property type="gene ID" value="CAC99136"/>
</dbReference>
<dbReference type="GeneID" id="986292"/>
<dbReference type="KEGG" id="lmo:lmo1058"/>
<dbReference type="PATRIC" id="fig|169963.11.peg.1088"/>
<dbReference type="eggNOG" id="COG4476">
    <property type="taxonomic scope" value="Bacteria"/>
</dbReference>
<dbReference type="HOGENOM" id="CLU_166693_1_0_9"/>
<dbReference type="OrthoDB" id="1649074at2"/>
<dbReference type="PhylomeDB" id="P67356"/>
<dbReference type="BioCyc" id="LMON169963:LMO1058-MONOMER"/>
<dbReference type="Proteomes" id="UP000000817">
    <property type="component" value="Chromosome"/>
</dbReference>
<dbReference type="Gene3D" id="1.10.220.80">
    <property type="entry name" value="BH2638-like"/>
    <property type="match status" value="1"/>
</dbReference>
<dbReference type="HAMAP" id="MF_01041">
    <property type="entry name" value="UPF0223"/>
    <property type="match status" value="1"/>
</dbReference>
<dbReference type="InterPro" id="IPR023324">
    <property type="entry name" value="BH2638-like_sf"/>
</dbReference>
<dbReference type="InterPro" id="IPR007920">
    <property type="entry name" value="UPF0223"/>
</dbReference>
<dbReference type="NCBIfam" id="NF003353">
    <property type="entry name" value="PRK04387.1"/>
    <property type="match status" value="1"/>
</dbReference>
<dbReference type="Pfam" id="PF05256">
    <property type="entry name" value="UPF0223"/>
    <property type="match status" value="1"/>
</dbReference>
<dbReference type="PIRSF" id="PIRSF037260">
    <property type="entry name" value="UPF0223"/>
    <property type="match status" value="1"/>
</dbReference>
<dbReference type="SUPFAM" id="SSF158504">
    <property type="entry name" value="BH2638-like"/>
    <property type="match status" value="1"/>
</dbReference>
<comment type="similarity">
    <text evidence="1">Belongs to the UPF0223 family.</text>
</comment>
<sequence>MEYSYPLNPDWTTEEMTIVVQFLEAIERAYEKGIDTLELKEKYRAFKQVVPAKGEEKRIGIDFEKASGYSAYKVMQLVKNATTSKIKMQP</sequence>
<evidence type="ECO:0000255" key="1">
    <source>
        <dbReference type="HAMAP-Rule" id="MF_01041"/>
    </source>
</evidence>